<reference key="1">
    <citation type="journal article" date="2013" name="Nature">
        <title>The zebrafish reference genome sequence and its relationship to the human genome.</title>
        <authorList>
            <person name="Howe K."/>
            <person name="Clark M.D."/>
            <person name="Torroja C.F."/>
            <person name="Torrance J."/>
            <person name="Berthelot C."/>
            <person name="Muffato M."/>
            <person name="Collins J.E."/>
            <person name="Humphray S."/>
            <person name="McLaren K."/>
            <person name="Matthews L."/>
            <person name="McLaren S."/>
            <person name="Sealy I."/>
            <person name="Caccamo M."/>
            <person name="Churcher C."/>
            <person name="Scott C."/>
            <person name="Barrett J.C."/>
            <person name="Koch R."/>
            <person name="Rauch G.J."/>
            <person name="White S."/>
            <person name="Chow W."/>
            <person name="Kilian B."/>
            <person name="Quintais L.T."/>
            <person name="Guerra-Assuncao J.A."/>
            <person name="Zhou Y."/>
            <person name="Gu Y."/>
            <person name="Yen J."/>
            <person name="Vogel J.H."/>
            <person name="Eyre T."/>
            <person name="Redmond S."/>
            <person name="Banerjee R."/>
            <person name="Chi J."/>
            <person name="Fu B."/>
            <person name="Langley E."/>
            <person name="Maguire S.F."/>
            <person name="Laird G.K."/>
            <person name="Lloyd D."/>
            <person name="Kenyon E."/>
            <person name="Donaldson S."/>
            <person name="Sehra H."/>
            <person name="Almeida-King J."/>
            <person name="Loveland J."/>
            <person name="Trevanion S."/>
            <person name="Jones M."/>
            <person name="Quail M."/>
            <person name="Willey D."/>
            <person name="Hunt A."/>
            <person name="Burton J."/>
            <person name="Sims S."/>
            <person name="McLay K."/>
            <person name="Plumb B."/>
            <person name="Davis J."/>
            <person name="Clee C."/>
            <person name="Oliver K."/>
            <person name="Clark R."/>
            <person name="Riddle C."/>
            <person name="Elliot D."/>
            <person name="Threadgold G."/>
            <person name="Harden G."/>
            <person name="Ware D."/>
            <person name="Begum S."/>
            <person name="Mortimore B."/>
            <person name="Kerry G."/>
            <person name="Heath P."/>
            <person name="Phillimore B."/>
            <person name="Tracey A."/>
            <person name="Corby N."/>
            <person name="Dunn M."/>
            <person name="Johnson C."/>
            <person name="Wood J."/>
            <person name="Clark S."/>
            <person name="Pelan S."/>
            <person name="Griffiths G."/>
            <person name="Smith M."/>
            <person name="Glithero R."/>
            <person name="Howden P."/>
            <person name="Barker N."/>
            <person name="Lloyd C."/>
            <person name="Stevens C."/>
            <person name="Harley J."/>
            <person name="Holt K."/>
            <person name="Panagiotidis G."/>
            <person name="Lovell J."/>
            <person name="Beasley H."/>
            <person name="Henderson C."/>
            <person name="Gordon D."/>
            <person name="Auger K."/>
            <person name="Wright D."/>
            <person name="Collins J."/>
            <person name="Raisen C."/>
            <person name="Dyer L."/>
            <person name="Leung K."/>
            <person name="Robertson L."/>
            <person name="Ambridge K."/>
            <person name="Leongamornlert D."/>
            <person name="McGuire S."/>
            <person name="Gilderthorp R."/>
            <person name="Griffiths C."/>
            <person name="Manthravadi D."/>
            <person name="Nichol S."/>
            <person name="Barker G."/>
            <person name="Whitehead S."/>
            <person name="Kay M."/>
            <person name="Brown J."/>
            <person name="Murnane C."/>
            <person name="Gray E."/>
            <person name="Humphries M."/>
            <person name="Sycamore N."/>
            <person name="Barker D."/>
            <person name="Saunders D."/>
            <person name="Wallis J."/>
            <person name="Babbage A."/>
            <person name="Hammond S."/>
            <person name="Mashreghi-Mohammadi M."/>
            <person name="Barr L."/>
            <person name="Martin S."/>
            <person name="Wray P."/>
            <person name="Ellington A."/>
            <person name="Matthews N."/>
            <person name="Ellwood M."/>
            <person name="Woodmansey R."/>
            <person name="Clark G."/>
            <person name="Cooper J."/>
            <person name="Tromans A."/>
            <person name="Grafham D."/>
            <person name="Skuce C."/>
            <person name="Pandian R."/>
            <person name="Andrews R."/>
            <person name="Harrison E."/>
            <person name="Kimberley A."/>
            <person name="Garnett J."/>
            <person name="Fosker N."/>
            <person name="Hall R."/>
            <person name="Garner P."/>
            <person name="Kelly D."/>
            <person name="Bird C."/>
            <person name="Palmer S."/>
            <person name="Gehring I."/>
            <person name="Berger A."/>
            <person name="Dooley C.M."/>
            <person name="Ersan-Urun Z."/>
            <person name="Eser C."/>
            <person name="Geiger H."/>
            <person name="Geisler M."/>
            <person name="Karotki L."/>
            <person name="Kirn A."/>
            <person name="Konantz J."/>
            <person name="Konantz M."/>
            <person name="Oberlander M."/>
            <person name="Rudolph-Geiger S."/>
            <person name="Teucke M."/>
            <person name="Lanz C."/>
            <person name="Raddatz G."/>
            <person name="Osoegawa K."/>
            <person name="Zhu B."/>
            <person name="Rapp A."/>
            <person name="Widaa S."/>
            <person name="Langford C."/>
            <person name="Yang F."/>
            <person name="Schuster S.C."/>
            <person name="Carter N.P."/>
            <person name="Harrow J."/>
            <person name="Ning Z."/>
            <person name="Herrero J."/>
            <person name="Searle S.M."/>
            <person name="Enright A."/>
            <person name="Geisler R."/>
            <person name="Plasterk R.H."/>
            <person name="Lee C."/>
            <person name="Westerfield M."/>
            <person name="de Jong P.J."/>
            <person name="Zon L.I."/>
            <person name="Postlethwait J.H."/>
            <person name="Nusslein-Volhard C."/>
            <person name="Hubbard T.J."/>
            <person name="Roest Crollius H."/>
            <person name="Rogers J."/>
            <person name="Stemple D.L."/>
        </authorList>
    </citation>
    <scope>NUCLEOTIDE SEQUENCE [LARGE SCALE GENOMIC DNA]</scope>
    <source>
        <strain>Tuebingen</strain>
    </source>
</reference>
<reference key="2">
    <citation type="submission" date="2008-04" db="EMBL/GenBank/DDBJ databases">
        <authorList>
            <consortium name="NIH - Zebrafish Gene Collection (ZGC) project"/>
        </authorList>
    </citation>
    <scope>NUCLEOTIDE SEQUENCE [LARGE SCALE MRNA]</scope>
</reference>
<reference key="3">
    <citation type="journal article" date="2007" name="Proc. Natl. Acad. Sci. U.S.A.">
        <title>Network of coregulated spliceosome components revealed by zebrafish mutant in recycling factor p110.</title>
        <authorList>
            <person name="Trede N.S."/>
            <person name="Medenbach J."/>
            <person name="Damianov A."/>
            <person name="Hung L.H."/>
            <person name="Weber G.J."/>
            <person name="Paw B.H."/>
            <person name="Zhou Y."/>
            <person name="Hersey C."/>
            <person name="Zapata A."/>
            <person name="Keefe M."/>
            <person name="Barut B.A."/>
            <person name="Stuart A.B."/>
            <person name="Katz T."/>
            <person name="Amemiya C.T."/>
            <person name="Zon L.I."/>
            <person name="Bindereif A."/>
        </authorList>
    </citation>
    <scope>FUNCTION</scope>
    <scope>DISRUPTION PHENOTYPE</scope>
</reference>
<feature type="chain" id="PRO_0000431579" description="Spliceosome associated factor 3, U4/U6 recycling protein">
    <location>
        <begin position="1"/>
        <end position="951"/>
    </location>
</feature>
<feature type="repeat" description="HAT 1" evidence="2">
    <location>
        <begin position="88"/>
        <end position="120"/>
    </location>
</feature>
<feature type="repeat" description="HAT 2" evidence="2">
    <location>
        <begin position="126"/>
        <end position="157"/>
    </location>
</feature>
<feature type="repeat" description="HAT 3" evidence="2">
    <location>
        <begin position="163"/>
        <end position="199"/>
    </location>
</feature>
<feature type="repeat" description="HAT 4" evidence="2">
    <location>
        <begin position="222"/>
        <end position="255"/>
    </location>
</feature>
<feature type="repeat" description="HAT 5" evidence="2">
    <location>
        <begin position="304"/>
        <end position="336"/>
    </location>
</feature>
<feature type="repeat" description="HAT 6" evidence="2">
    <location>
        <begin position="339"/>
        <end position="371"/>
    </location>
</feature>
<feature type="repeat" description="HAT 7" evidence="2">
    <location>
        <begin position="374"/>
        <end position="410"/>
    </location>
</feature>
<feature type="repeat" description="HAT 8" evidence="2">
    <location>
        <begin position="467"/>
        <end position="500"/>
    </location>
</feature>
<feature type="domain" description="RRM 1" evidence="3">
    <location>
        <begin position="688"/>
        <end position="766"/>
    </location>
</feature>
<feature type="domain" description="RRM 2" evidence="3">
    <location>
        <begin position="785"/>
        <end position="862"/>
    </location>
</feature>
<feature type="region of interest" description="Disordered" evidence="4">
    <location>
        <begin position="1"/>
        <end position="58"/>
    </location>
</feature>
<feature type="region of interest" description="Necessary and sufficient for U6 snRNA binding" evidence="1">
    <location>
        <begin position="517"/>
        <end position="941"/>
    </location>
</feature>
<feature type="region of interest" description="Disordered" evidence="4">
    <location>
        <begin position="567"/>
        <end position="686"/>
    </location>
</feature>
<feature type="region of interest" description="Disordered" evidence="4">
    <location>
        <begin position="905"/>
        <end position="938"/>
    </location>
</feature>
<feature type="coiled-coil region" evidence="2">
    <location>
        <begin position="533"/>
        <end position="593"/>
    </location>
</feature>
<feature type="compositionally biased region" description="Acidic residues" evidence="4">
    <location>
        <begin position="14"/>
        <end position="56"/>
    </location>
</feature>
<feature type="compositionally biased region" description="Basic and acidic residues" evidence="4">
    <location>
        <begin position="567"/>
        <end position="581"/>
    </location>
</feature>
<feature type="compositionally biased region" description="Basic residues" evidence="4">
    <location>
        <begin position="582"/>
        <end position="596"/>
    </location>
</feature>
<feature type="compositionally biased region" description="Acidic residues" evidence="4">
    <location>
        <begin position="608"/>
        <end position="619"/>
    </location>
</feature>
<feature type="compositionally biased region" description="Basic and acidic residues" evidence="4">
    <location>
        <begin position="674"/>
        <end position="686"/>
    </location>
</feature>
<feature type="compositionally biased region" description="Polar residues" evidence="4">
    <location>
        <begin position="927"/>
        <end position="938"/>
    </location>
</feature>
<gene>
    <name evidence="8" type="primary">sart3</name>
    <name type="synonym">egy</name>
    <name type="ORF">si:ch211-191d15.4</name>
    <name type="ORF">wu:fc51h03</name>
</gene>
<protein>
    <recommendedName>
        <fullName evidence="1">Spliceosome associated factor 3, U4/U6 recycling protein</fullName>
    </recommendedName>
    <alternativeName>
        <fullName evidence="6">Squamous cell carcinoma antigen recognized by T-cells 3</fullName>
        <shortName>SART-3</shortName>
    </alternativeName>
</protein>
<proteinExistence type="evidence at transcript level"/>
<dbReference type="EMBL" id="AL845326">
    <property type="status" value="NOT_ANNOTATED_CDS"/>
    <property type="molecule type" value="Genomic_DNA"/>
</dbReference>
<dbReference type="EMBL" id="BC163594">
    <property type="protein sequence ID" value="AAI63594.1"/>
    <property type="molecule type" value="mRNA"/>
</dbReference>
<dbReference type="RefSeq" id="XP_005165211.1">
    <property type="nucleotide sequence ID" value="XM_005165154.5"/>
</dbReference>
<dbReference type="RefSeq" id="XP_017211593.1">
    <property type="nucleotide sequence ID" value="XM_017356104.3"/>
</dbReference>
<dbReference type="RefSeq" id="XP_017211594.1">
    <property type="nucleotide sequence ID" value="XM_017356105.1"/>
</dbReference>
<dbReference type="RefSeq" id="XP_068077318.1">
    <property type="nucleotide sequence ID" value="XM_068221217.1"/>
</dbReference>
<dbReference type="RefSeq" id="XP_068077319.1">
    <property type="nucleotide sequence ID" value="XM_068221218.1"/>
</dbReference>
<dbReference type="SMR" id="B3DJT0"/>
<dbReference type="FunCoup" id="B3DJT0">
    <property type="interactions" value="2521"/>
</dbReference>
<dbReference type="STRING" id="7955.ENSDARP00000004923"/>
<dbReference type="PaxDb" id="7955-ENSDARP00000004923"/>
<dbReference type="PeptideAtlas" id="B3DJT0"/>
<dbReference type="Ensembl" id="ENSDART00000124545">
    <property type="protein sequence ID" value="ENSDARP00000106223"/>
    <property type="gene ID" value="ENSDARG00000008032"/>
</dbReference>
<dbReference type="GeneID" id="558581"/>
<dbReference type="AGR" id="ZFIN:ZDB-GENE-040724-10"/>
<dbReference type="CTD" id="9733"/>
<dbReference type="ZFIN" id="ZDB-GENE-040724-10">
    <property type="gene designation" value="sart3"/>
</dbReference>
<dbReference type="eggNOG" id="KOG0128">
    <property type="taxonomic scope" value="Eukaryota"/>
</dbReference>
<dbReference type="HOGENOM" id="CLU_007172_0_0_1"/>
<dbReference type="InParanoid" id="B3DJT0"/>
<dbReference type="OMA" id="LWARYIL"/>
<dbReference type="OrthoDB" id="360390at2759"/>
<dbReference type="PhylomeDB" id="B3DJT0"/>
<dbReference type="TreeFam" id="TF317554"/>
<dbReference type="ChiTaRS" id="sart3">
    <property type="organism name" value="zebrafish"/>
</dbReference>
<dbReference type="PRO" id="PR:B3DJT0"/>
<dbReference type="Proteomes" id="UP000000437">
    <property type="component" value="Chromosome 5"/>
</dbReference>
<dbReference type="Bgee" id="ENSDARG00000008032">
    <property type="expression patterns" value="Expressed in presomitic mesoderm and 28 other cell types or tissues"/>
</dbReference>
<dbReference type="ExpressionAtlas" id="B3DJT0">
    <property type="expression patterns" value="baseline"/>
</dbReference>
<dbReference type="GO" id="GO:0061574">
    <property type="term" value="C:ASAP complex"/>
    <property type="evidence" value="ECO:0000318"/>
    <property type="project" value="GO_Central"/>
</dbReference>
<dbReference type="GO" id="GO:0015030">
    <property type="term" value="C:Cajal body"/>
    <property type="evidence" value="ECO:0000250"/>
    <property type="project" value="UniProtKB"/>
</dbReference>
<dbReference type="GO" id="GO:0005737">
    <property type="term" value="C:cytoplasm"/>
    <property type="evidence" value="ECO:0000318"/>
    <property type="project" value="GO_Central"/>
</dbReference>
<dbReference type="GO" id="GO:0016607">
    <property type="term" value="C:nuclear speck"/>
    <property type="evidence" value="ECO:0007669"/>
    <property type="project" value="UniProtKB-SubCell"/>
</dbReference>
<dbReference type="GO" id="GO:0005654">
    <property type="term" value="C:nucleoplasm"/>
    <property type="evidence" value="ECO:0000250"/>
    <property type="project" value="UniProtKB"/>
</dbReference>
<dbReference type="GO" id="GO:0005634">
    <property type="term" value="C:nucleus"/>
    <property type="evidence" value="ECO:0000250"/>
    <property type="project" value="UniProtKB"/>
</dbReference>
<dbReference type="GO" id="GO:0042393">
    <property type="term" value="F:histone binding"/>
    <property type="evidence" value="ECO:0000250"/>
    <property type="project" value="UniProtKB"/>
</dbReference>
<dbReference type="GO" id="GO:0017070">
    <property type="term" value="F:U6 snRNA binding"/>
    <property type="evidence" value="ECO:0000250"/>
    <property type="project" value="UniProtKB"/>
</dbReference>
<dbReference type="GO" id="GO:0031017">
    <property type="term" value="P:exocrine pancreas development"/>
    <property type="evidence" value="ECO:0000315"/>
    <property type="project" value="ZFIN"/>
</dbReference>
<dbReference type="GO" id="GO:0061484">
    <property type="term" value="P:hematopoietic stem cell homeostasis"/>
    <property type="evidence" value="ECO:0000315"/>
    <property type="project" value="ZFIN"/>
</dbReference>
<dbReference type="GO" id="GO:0030098">
    <property type="term" value="P:lymphocyte differentiation"/>
    <property type="evidence" value="ECO:0000315"/>
    <property type="project" value="ZFIN"/>
</dbReference>
<dbReference type="GO" id="GO:0000398">
    <property type="term" value="P:mRNA splicing, via spliceosome"/>
    <property type="evidence" value="ECO:0000250"/>
    <property type="project" value="UniProtKB"/>
</dbReference>
<dbReference type="GO" id="GO:0006334">
    <property type="term" value="P:nucleosome assembly"/>
    <property type="evidence" value="ECO:0000250"/>
    <property type="project" value="UniProtKB"/>
</dbReference>
<dbReference type="GO" id="GO:1902033">
    <property type="term" value="P:regulation of hematopoietic stem cell proliferation"/>
    <property type="evidence" value="ECO:0000315"/>
    <property type="project" value="ZFIN"/>
</dbReference>
<dbReference type="GO" id="GO:1902253">
    <property type="term" value="P:regulation of intrinsic apoptotic signaling pathway by p53 class mediator"/>
    <property type="evidence" value="ECO:0000315"/>
    <property type="project" value="ZFIN"/>
</dbReference>
<dbReference type="GO" id="GO:0000245">
    <property type="term" value="P:spliceosomal complex assembly"/>
    <property type="evidence" value="ECO:0000315"/>
    <property type="project" value="ZFIN"/>
</dbReference>
<dbReference type="GO" id="GO:0000387">
    <property type="term" value="P:spliceosomal snRNP assembly"/>
    <property type="evidence" value="ECO:0000315"/>
    <property type="project" value="UniProtKB"/>
</dbReference>
<dbReference type="GO" id="GO:0048538">
    <property type="term" value="P:thymus development"/>
    <property type="evidence" value="ECO:0000315"/>
    <property type="project" value="ZFIN"/>
</dbReference>
<dbReference type="GO" id="GO:0140673">
    <property type="term" value="P:transcription elongation-coupled chromatin remodeling"/>
    <property type="evidence" value="ECO:0000250"/>
    <property type="project" value="UniProtKB"/>
</dbReference>
<dbReference type="CDD" id="cd12391">
    <property type="entry name" value="RRM1_SART3"/>
    <property type="match status" value="1"/>
</dbReference>
<dbReference type="CDD" id="cd12392">
    <property type="entry name" value="RRM2_SART3"/>
    <property type="match status" value="1"/>
</dbReference>
<dbReference type="FunFam" id="1.25.40.10:FF:000098">
    <property type="entry name" value="Squamous cell carcinoma antigen recognized by T-cells 3"/>
    <property type="match status" value="1"/>
</dbReference>
<dbReference type="FunFam" id="3.30.70.330:FF:000229">
    <property type="entry name" value="Squamous cell carcinoma antigen recognized by T-cells 3"/>
    <property type="match status" value="1"/>
</dbReference>
<dbReference type="FunFam" id="1.25.40.10:FF:000081">
    <property type="entry name" value="squamous cell carcinoma antigen recognized by T-cells 3"/>
    <property type="match status" value="1"/>
</dbReference>
<dbReference type="FunFam" id="3.30.70.330:FF:000271">
    <property type="entry name" value="squamous cell carcinoma antigen recognized by T-cells 3"/>
    <property type="match status" value="1"/>
</dbReference>
<dbReference type="Gene3D" id="3.30.70.330">
    <property type="match status" value="2"/>
</dbReference>
<dbReference type="Gene3D" id="1.25.40.10">
    <property type="entry name" value="Tetratricopeptide repeat domain"/>
    <property type="match status" value="2"/>
</dbReference>
<dbReference type="InterPro" id="IPR003107">
    <property type="entry name" value="HAT"/>
</dbReference>
<dbReference type="InterPro" id="IPR012677">
    <property type="entry name" value="Nucleotide-bd_a/b_plait_sf"/>
</dbReference>
<dbReference type="InterPro" id="IPR035979">
    <property type="entry name" value="RBD_domain_sf"/>
</dbReference>
<dbReference type="InterPro" id="IPR000504">
    <property type="entry name" value="RRM_dom"/>
</dbReference>
<dbReference type="InterPro" id="IPR034217">
    <property type="entry name" value="SART3_RRM1"/>
</dbReference>
<dbReference type="InterPro" id="IPR034218">
    <property type="entry name" value="SART3_RRM2"/>
</dbReference>
<dbReference type="InterPro" id="IPR008847">
    <property type="entry name" value="Suf"/>
</dbReference>
<dbReference type="InterPro" id="IPR011990">
    <property type="entry name" value="TPR-like_helical_dom_sf"/>
</dbReference>
<dbReference type="PANTHER" id="PTHR17204">
    <property type="entry name" value="PRE-MRNA PROCESSING PROTEIN PRP39-RELATED"/>
    <property type="match status" value="1"/>
</dbReference>
<dbReference type="PANTHER" id="PTHR17204:SF25">
    <property type="entry name" value="RRM DOMAIN-CONTAINING PROTEIN"/>
    <property type="match status" value="1"/>
</dbReference>
<dbReference type="Pfam" id="PF16605">
    <property type="entry name" value="LSM_int_assoc"/>
    <property type="match status" value="1"/>
</dbReference>
<dbReference type="Pfam" id="PF00076">
    <property type="entry name" value="RRM_1"/>
    <property type="match status" value="2"/>
</dbReference>
<dbReference type="Pfam" id="PF05843">
    <property type="entry name" value="Suf"/>
    <property type="match status" value="2"/>
</dbReference>
<dbReference type="SMART" id="SM00386">
    <property type="entry name" value="HAT"/>
    <property type="match status" value="7"/>
</dbReference>
<dbReference type="SMART" id="SM00360">
    <property type="entry name" value="RRM"/>
    <property type="match status" value="2"/>
</dbReference>
<dbReference type="SUPFAM" id="SSF54928">
    <property type="entry name" value="RNA-binding domain, RBD"/>
    <property type="match status" value="2"/>
</dbReference>
<dbReference type="SUPFAM" id="SSF48452">
    <property type="entry name" value="TPR-like"/>
    <property type="match status" value="1"/>
</dbReference>
<dbReference type="PROSITE" id="PS50102">
    <property type="entry name" value="RRM"/>
    <property type="match status" value="2"/>
</dbReference>
<sequence length="951" mass="109735">MAATGNEEQTLLPDIEEEAEGMEREMESEDDEEEGMGVEHSEEEDEEDTSEDERENEAEIQRLEEQLSINAFDYNCHVDLIKLLRQEGKLHRLRKARQKMSELFPLTEEIWLDWLKDEIRITEDESDREKVYELFERAIKDYVCPEIWLEYVQYSIGGMGAQGGIERVRSIFERALTAVGLHMTKGASIWEAYREFEIVILSTVQPPPGTVPSQEQQELLSAQLERIHTLFRRQLAVPLMDMEGTYAEYSDWADDGVPETVTHQYRRALQQMEKGKPYEEALLVSEPPKLAEYQSYIDFEIKEGDPARVQIIFERALAENCLVPDLWIKYTTYLDRQLKIKDLVLSAHERAVRNCPWTMGLWKSYLLALERHGADHQTVKDVFEKALNAGFIQATDYVEIWQSYLDYLRRRVDFSKEWSRELDELRAAFSRSLEYLKQDVEERFSESGDLSCTLMQIWARIEALHCKNMQKARELWDSIMTKGNAKYANMWLEYYNLERSYGDAAHCRKALHRAVQCTSDYPEHVCDVLLNFERVEGSLEDWDAAVQKTETKLNRVCEQRARVAEKEALHARQEEEKAEQRRKVKADKKAQKKGQKANRTGDKRKAEDDDEEEWGEEAELPSKRLRGEDDFDSTVTEELMETESGLFGRRAPPARKTEPPGFRKNQQGAPEPQRQPHDMPKEQRKDENCVFVSNLTFNMEDPEGKLRTLFQGCGTIQQVRPVFTAKGTFRGYCYVQFEDRLAVPEALKMDRQEVDGRPMYVSPCVDKNKNPDFKVFKYKTSMEKHKIFISGLPYSATKETLEDLCKEHGTIRAIRIVTNRSGKSKGLAYVEFEDEAQASQAVLKMDGTMLENFTLSVAISNPPGRRMKDEAAPSRFLGAAMPRQLQGARGKGRTQISLLPRSLYRQSTPDAKAENGTISAPHATVTDGETSLDTQTKSLSNEDFARMLLKK</sequence>
<organism evidence="7">
    <name type="scientific">Danio rerio</name>
    <name type="common">Zebrafish</name>
    <name type="synonym">Brachydanio rerio</name>
    <dbReference type="NCBI Taxonomy" id="7955"/>
    <lineage>
        <taxon>Eukaryota</taxon>
        <taxon>Metazoa</taxon>
        <taxon>Chordata</taxon>
        <taxon>Craniata</taxon>
        <taxon>Vertebrata</taxon>
        <taxon>Euteleostomi</taxon>
        <taxon>Actinopterygii</taxon>
        <taxon>Neopterygii</taxon>
        <taxon>Teleostei</taxon>
        <taxon>Ostariophysi</taxon>
        <taxon>Cypriniformes</taxon>
        <taxon>Danionidae</taxon>
        <taxon>Danioninae</taxon>
        <taxon>Danio</taxon>
    </lineage>
</organism>
<evidence type="ECO:0000250" key="1">
    <source>
        <dbReference type="UniProtKB" id="Q15020"/>
    </source>
</evidence>
<evidence type="ECO:0000255" key="2"/>
<evidence type="ECO:0000255" key="3">
    <source>
        <dbReference type="PROSITE-ProRule" id="PRU00176"/>
    </source>
</evidence>
<evidence type="ECO:0000256" key="4">
    <source>
        <dbReference type="SAM" id="MobiDB-lite"/>
    </source>
</evidence>
<evidence type="ECO:0000269" key="5">
    <source>
    </source>
</evidence>
<evidence type="ECO:0000305" key="6"/>
<evidence type="ECO:0000312" key="7">
    <source>
        <dbReference type="EMBL" id="AAI63594.1"/>
    </source>
</evidence>
<evidence type="ECO:0000312" key="8">
    <source>
        <dbReference type="ZFIN" id="ZDB-GENE-040724-10"/>
    </source>
</evidence>
<comment type="function">
    <text evidence="1 5">U6 snRNP-binding protein that functions as a recycling factor of the splicing machinery. Promotes the initial reassembly of U4 and U6 snRNPs following their ejection from the spliceosome during its maturation (PubMed:17416673). May also function as a substrate targeting factor for deubiquitinases and mediate the deubiquitination of components of the spliceosome and histones (By similarity).</text>
</comment>
<comment type="subcellular location">
    <subcellularLocation>
        <location evidence="1">Nucleus</location>
        <location evidence="1">Nucleoplasm</location>
    </subcellularLocation>
    <subcellularLocation>
        <location evidence="1">Nucleus</location>
        <location evidence="1">Cajal body</location>
    </subcellularLocation>
    <subcellularLocation>
        <location evidence="1">Nucleus speckle</location>
    </subcellularLocation>
    <subcellularLocation>
        <location evidence="1">Cytoplasm</location>
    </subcellularLocation>
</comment>
<comment type="disruption phenotype">
    <text evidence="5">The egy mutant embryos that lack detectable sart3 expression display microcephaly, microphthalmia and die by 7 to 8 dpf. Pharyngeal arch formation is defective resulting in a thymus devoid of lymphocytes and exocrine pancreas development is also impaired.</text>
</comment>
<name>SART3_DANRE</name>
<keyword id="KW-0175">Coiled coil</keyword>
<keyword id="KW-0963">Cytoplasm</keyword>
<keyword id="KW-0507">mRNA processing</keyword>
<keyword id="KW-0508">mRNA splicing</keyword>
<keyword id="KW-0539">Nucleus</keyword>
<keyword id="KW-1185">Reference proteome</keyword>
<keyword id="KW-0677">Repeat</keyword>
<keyword id="KW-0694">RNA-binding</keyword>
<accession>B3DJT0</accession>